<proteinExistence type="inferred from homology"/>
<reference key="1">
    <citation type="journal article" date="2009" name="PLoS Pathog.">
        <title>Molecular evolutionary consequences of niche restriction in Francisella tularensis, a facultative intracellular pathogen.</title>
        <authorList>
            <person name="Larsson P."/>
            <person name="Elfsmark D."/>
            <person name="Svensson K."/>
            <person name="Wikstroem P."/>
            <person name="Forsman M."/>
            <person name="Brettin T."/>
            <person name="Keim P."/>
            <person name="Johansson A."/>
        </authorList>
    </citation>
    <scope>NUCLEOTIDE SEQUENCE [LARGE SCALE GENOMIC DNA]</scope>
    <source>
        <strain>FSC147</strain>
    </source>
</reference>
<evidence type="ECO:0000255" key="1">
    <source>
        <dbReference type="HAMAP-Rule" id="MF_00251"/>
    </source>
</evidence>
<evidence type="ECO:0000305" key="2"/>
<keyword id="KW-0687">Ribonucleoprotein</keyword>
<keyword id="KW-0689">Ribosomal protein</keyword>
<dbReference type="EMBL" id="CP000915">
    <property type="protein sequence ID" value="ACD31328.1"/>
    <property type="molecule type" value="Genomic_DNA"/>
</dbReference>
<dbReference type="SMR" id="B2SDW4"/>
<dbReference type="KEGG" id="ftm:FTM_1506"/>
<dbReference type="HOGENOM" id="CLU_135723_6_2_6"/>
<dbReference type="GO" id="GO:0005737">
    <property type="term" value="C:cytoplasm"/>
    <property type="evidence" value="ECO:0007669"/>
    <property type="project" value="UniProtKB-ARBA"/>
</dbReference>
<dbReference type="GO" id="GO:1990904">
    <property type="term" value="C:ribonucleoprotein complex"/>
    <property type="evidence" value="ECO:0007669"/>
    <property type="project" value="UniProtKB-KW"/>
</dbReference>
<dbReference type="GO" id="GO:0005840">
    <property type="term" value="C:ribosome"/>
    <property type="evidence" value="ECO:0007669"/>
    <property type="project" value="UniProtKB-KW"/>
</dbReference>
<dbReference type="GO" id="GO:0003735">
    <property type="term" value="F:structural constituent of ribosome"/>
    <property type="evidence" value="ECO:0007669"/>
    <property type="project" value="InterPro"/>
</dbReference>
<dbReference type="GO" id="GO:0006412">
    <property type="term" value="P:translation"/>
    <property type="evidence" value="ECO:0007669"/>
    <property type="project" value="UniProtKB-UniRule"/>
</dbReference>
<dbReference type="HAMAP" id="MF_00251">
    <property type="entry name" value="Ribosomal_bL36"/>
    <property type="match status" value="1"/>
</dbReference>
<dbReference type="InterPro" id="IPR000473">
    <property type="entry name" value="Ribosomal_bL36"/>
</dbReference>
<dbReference type="InterPro" id="IPR035977">
    <property type="entry name" value="Ribosomal_bL36_sp"/>
</dbReference>
<dbReference type="NCBIfam" id="TIGR01022">
    <property type="entry name" value="rpmJ_bact"/>
    <property type="match status" value="1"/>
</dbReference>
<dbReference type="PANTHER" id="PTHR42888">
    <property type="entry name" value="50S RIBOSOMAL PROTEIN L36, CHLOROPLASTIC"/>
    <property type="match status" value="1"/>
</dbReference>
<dbReference type="PANTHER" id="PTHR42888:SF1">
    <property type="entry name" value="LARGE RIBOSOMAL SUBUNIT PROTEIN BL36C"/>
    <property type="match status" value="1"/>
</dbReference>
<dbReference type="Pfam" id="PF00444">
    <property type="entry name" value="Ribosomal_L36"/>
    <property type="match status" value="1"/>
</dbReference>
<dbReference type="SUPFAM" id="SSF57840">
    <property type="entry name" value="Ribosomal protein L36"/>
    <property type="match status" value="1"/>
</dbReference>
<dbReference type="PROSITE" id="PS00828">
    <property type="entry name" value="RIBOSOMAL_L36"/>
    <property type="match status" value="1"/>
</dbReference>
<organism>
    <name type="scientific">Francisella tularensis subsp. mediasiatica (strain FSC147)</name>
    <dbReference type="NCBI Taxonomy" id="441952"/>
    <lineage>
        <taxon>Bacteria</taxon>
        <taxon>Pseudomonadati</taxon>
        <taxon>Pseudomonadota</taxon>
        <taxon>Gammaproteobacteria</taxon>
        <taxon>Thiotrichales</taxon>
        <taxon>Francisellaceae</taxon>
        <taxon>Francisella</taxon>
    </lineage>
</organism>
<feature type="chain" id="PRO_1000101028" description="Large ribosomal subunit protein bL36">
    <location>
        <begin position="1"/>
        <end position="37"/>
    </location>
</feature>
<accession>B2SDW4</accession>
<sequence length="37" mass="4393">MKVRASVKKMCRNCKVIKRNRVVRVICADPRHKQRQG</sequence>
<comment type="similarity">
    <text evidence="1">Belongs to the bacterial ribosomal protein bL36 family.</text>
</comment>
<gene>
    <name evidence="1" type="primary">rpmJ</name>
    <name type="ordered locus">FTM_1506</name>
</gene>
<name>RL36_FRATM</name>
<protein>
    <recommendedName>
        <fullName evidence="1">Large ribosomal subunit protein bL36</fullName>
    </recommendedName>
    <alternativeName>
        <fullName evidence="2">50S ribosomal protein L36</fullName>
    </alternativeName>
</protein>